<proteinExistence type="inferred from homology"/>
<evidence type="ECO:0000255" key="1">
    <source>
        <dbReference type="HAMAP-Rule" id="MF_00294"/>
    </source>
</evidence>
<evidence type="ECO:0000305" key="2"/>
<feature type="chain" id="PRO_0000356466" description="Large ribosomal subunit protein bL33">
    <location>
        <begin position="1"/>
        <end position="51"/>
    </location>
</feature>
<dbReference type="EMBL" id="CP000439">
    <property type="protein sequence ID" value="ABK89238.1"/>
    <property type="molecule type" value="Genomic_DNA"/>
</dbReference>
<dbReference type="RefSeq" id="WP_003014820.1">
    <property type="nucleotide sequence ID" value="NZ_CP009633.1"/>
</dbReference>
<dbReference type="SMR" id="A0Q4S3"/>
<dbReference type="GeneID" id="75264166"/>
<dbReference type="KEGG" id="ftn:FTN_0332"/>
<dbReference type="KEGG" id="ftx:AW25_1708"/>
<dbReference type="BioCyc" id="FTUL401614:G1G75-345-MONOMER"/>
<dbReference type="Proteomes" id="UP000000762">
    <property type="component" value="Chromosome"/>
</dbReference>
<dbReference type="GO" id="GO:0022625">
    <property type="term" value="C:cytosolic large ribosomal subunit"/>
    <property type="evidence" value="ECO:0007669"/>
    <property type="project" value="TreeGrafter"/>
</dbReference>
<dbReference type="GO" id="GO:0003735">
    <property type="term" value="F:structural constituent of ribosome"/>
    <property type="evidence" value="ECO:0007669"/>
    <property type="project" value="InterPro"/>
</dbReference>
<dbReference type="GO" id="GO:0006412">
    <property type="term" value="P:translation"/>
    <property type="evidence" value="ECO:0007669"/>
    <property type="project" value="UniProtKB-UniRule"/>
</dbReference>
<dbReference type="FunFam" id="2.20.28.120:FF:000001">
    <property type="entry name" value="50S ribosomal protein L33"/>
    <property type="match status" value="1"/>
</dbReference>
<dbReference type="Gene3D" id="2.20.28.120">
    <property type="entry name" value="Ribosomal protein L33"/>
    <property type="match status" value="1"/>
</dbReference>
<dbReference type="HAMAP" id="MF_00294">
    <property type="entry name" value="Ribosomal_bL33"/>
    <property type="match status" value="1"/>
</dbReference>
<dbReference type="InterPro" id="IPR001705">
    <property type="entry name" value="Ribosomal_bL33"/>
</dbReference>
<dbReference type="InterPro" id="IPR018264">
    <property type="entry name" value="Ribosomal_bL33_CS"/>
</dbReference>
<dbReference type="InterPro" id="IPR038584">
    <property type="entry name" value="Ribosomal_bL33_sf"/>
</dbReference>
<dbReference type="InterPro" id="IPR011332">
    <property type="entry name" value="Ribosomal_zn-bd"/>
</dbReference>
<dbReference type="NCBIfam" id="NF001860">
    <property type="entry name" value="PRK00595.1"/>
    <property type="match status" value="1"/>
</dbReference>
<dbReference type="NCBIfam" id="TIGR01023">
    <property type="entry name" value="rpmG_bact"/>
    <property type="match status" value="1"/>
</dbReference>
<dbReference type="PANTHER" id="PTHR15238">
    <property type="entry name" value="54S RIBOSOMAL PROTEIN L39, MITOCHONDRIAL"/>
    <property type="match status" value="1"/>
</dbReference>
<dbReference type="PANTHER" id="PTHR15238:SF1">
    <property type="entry name" value="LARGE RIBOSOMAL SUBUNIT PROTEIN BL33M"/>
    <property type="match status" value="1"/>
</dbReference>
<dbReference type="Pfam" id="PF00471">
    <property type="entry name" value="Ribosomal_L33"/>
    <property type="match status" value="1"/>
</dbReference>
<dbReference type="SUPFAM" id="SSF57829">
    <property type="entry name" value="Zn-binding ribosomal proteins"/>
    <property type="match status" value="1"/>
</dbReference>
<dbReference type="PROSITE" id="PS00582">
    <property type="entry name" value="RIBOSOMAL_L33"/>
    <property type="match status" value="1"/>
</dbReference>
<keyword id="KW-0687">Ribonucleoprotein</keyword>
<keyword id="KW-0689">Ribosomal protein</keyword>
<reference key="1">
    <citation type="journal article" date="2007" name="Genome Biol.">
        <title>Comparison of Francisella tularensis genomes reveals evolutionary events associated with the emergence of human pathogenic strains.</title>
        <authorList>
            <person name="Rohmer L."/>
            <person name="Fong C."/>
            <person name="Abmayr S."/>
            <person name="Wasnick M."/>
            <person name="Larson Freeman T.J."/>
            <person name="Radey M."/>
            <person name="Guina T."/>
            <person name="Svensson K."/>
            <person name="Hayden H.S."/>
            <person name="Jacobs M."/>
            <person name="Gallagher L.A."/>
            <person name="Manoil C."/>
            <person name="Ernst R.K."/>
            <person name="Drees B."/>
            <person name="Buckley D."/>
            <person name="Haugen E."/>
            <person name="Bovee D."/>
            <person name="Zhou Y."/>
            <person name="Chang J."/>
            <person name="Levy R."/>
            <person name="Lim R."/>
            <person name="Gillett W."/>
            <person name="Guenthener D."/>
            <person name="Kang A."/>
            <person name="Shaffer S.A."/>
            <person name="Taylor G."/>
            <person name="Chen J."/>
            <person name="Gallis B."/>
            <person name="D'Argenio D.A."/>
            <person name="Forsman M."/>
            <person name="Olson M.V."/>
            <person name="Goodlett D.R."/>
            <person name="Kaul R."/>
            <person name="Miller S.I."/>
            <person name="Brittnacher M.J."/>
        </authorList>
    </citation>
    <scope>NUCLEOTIDE SEQUENCE [LARGE SCALE GENOMIC DNA]</scope>
    <source>
        <strain>U112</strain>
    </source>
</reference>
<protein>
    <recommendedName>
        <fullName evidence="1">Large ribosomal subunit protein bL33</fullName>
    </recommendedName>
    <alternativeName>
        <fullName evidence="2">50S ribosomal protein L33</fullName>
    </alternativeName>
</protein>
<sequence>MREKIRLVSSAKTGHFYTTTKNKKEMPNKMEIKKYDPVVRKHVMYKEAKIK</sequence>
<comment type="similarity">
    <text evidence="1">Belongs to the bacterial ribosomal protein bL33 family.</text>
</comment>
<name>RL33_FRATN</name>
<accession>A0Q4S3</accession>
<gene>
    <name evidence="1" type="primary">rpmG</name>
    <name type="ordered locus">FTN_0332</name>
</gene>
<organism>
    <name type="scientific">Francisella tularensis subsp. novicida (strain U112)</name>
    <dbReference type="NCBI Taxonomy" id="401614"/>
    <lineage>
        <taxon>Bacteria</taxon>
        <taxon>Pseudomonadati</taxon>
        <taxon>Pseudomonadota</taxon>
        <taxon>Gammaproteobacteria</taxon>
        <taxon>Thiotrichales</taxon>
        <taxon>Francisellaceae</taxon>
        <taxon>Francisella</taxon>
    </lineage>
</organism>